<protein>
    <recommendedName>
        <fullName evidence="13">Transcriptional regulatory protein WalR</fullName>
    </recommendedName>
</protein>
<proteinExistence type="evidence at protein level"/>
<comment type="function">
    <text evidence="1 2 3 6 7">Member of the two-component regulatory system WalK/WalR that regulates genes involved in cell wall metabolism (By similarity). Binds to the promoter region of the transcription factor fabT gene in the fabTH-acp operon in vitro (By similarity). Inhibits transcription of fabT, probably acting in an unphosphorylated form, thereby playing a role in the regulation of fatty acid biosynthesis (By similarity). Essential for normal growth in vitro (PubMed:12379689). Required for maintaining normal cellular morphology, acting, at least in part, by regulating peptidoglycan hydrolase pcsB (PubMed:14651645). Involved in maintaining expression of WalRK regulon genes in exponentially growing cells (By similarity).</text>
</comment>
<comment type="subunit">
    <text evidence="1">Monomer. Homodimer.</text>
</comment>
<comment type="subcellular location">
    <subcellularLocation>
        <location evidence="2">Cytoplasm</location>
    </subcellularLocation>
    <text evidence="2">Localized to cytoplasm around nucleoids in exponentially growing cells.</text>
</comment>
<comment type="PTM">
    <text evidence="8 9">Phosphorylated by WalK; can also be dephosphorylated by WalK.</text>
</comment>
<comment type="miscellaneous">
    <text evidence="6">Part of a walR-walK-walJ operon.</text>
</comment>
<comment type="sequence caution" evidence="13">
    <conflict type="erroneous initiation">
        <sequence resource="EMBL-CDS" id="AAK99910"/>
    </conflict>
    <text>Extended N-terminus.</text>
</comment>
<organism evidence="15">
    <name type="scientific">Streptococcus pneumoniae (strain ATCC BAA-255 / R6)</name>
    <dbReference type="NCBI Taxonomy" id="171101"/>
    <lineage>
        <taxon>Bacteria</taxon>
        <taxon>Bacillati</taxon>
        <taxon>Bacillota</taxon>
        <taxon>Bacilli</taxon>
        <taxon>Lactobacillales</taxon>
        <taxon>Streptococcaceae</taxon>
        <taxon>Streptococcus</taxon>
    </lineage>
</organism>
<sequence length="234" mass="26816">MKKILIVDDEKPISDIIKFNMTKEGYEVVTAFNGREALEQFEAEQPDIIILDLMLPEIDGLEVAKTIRKTSSVPILMLSAKDSEFDKVIGLELGADDYVTKPFSNRELQARVKALLRRSQPMPVDGQEADSKPQPIQIGDLEIVPDAYVAKKYGEELDLTHREFELLYHLASHTGQVITREHLLETVWGYDYFGDVRTVDVTVRRLREKIEDTPSRPEYILTRRGVGYYMRNNA</sequence>
<feature type="chain" id="PRO_0000459007" description="Transcriptional regulatory protein WalR">
    <location>
        <begin position="1"/>
        <end position="234"/>
    </location>
</feature>
<feature type="domain" description="Response regulatory" evidence="4">
    <location>
        <begin position="3"/>
        <end position="116"/>
    </location>
</feature>
<feature type="DNA-binding region" description="OmpR/PhoB-type" evidence="5">
    <location>
        <begin position="133"/>
        <end position="232"/>
    </location>
</feature>
<feature type="modified residue" description="4-aspartylphosphate" evidence="4">
    <location>
        <position position="52"/>
    </location>
</feature>
<feature type="mutagenesis site" description="Viable, but may have less transcriptional activity." evidence="7">
    <original>D</original>
    <variation>E</variation>
    <location>
        <position position="52"/>
    </location>
</feature>
<feature type="strand" evidence="17">
    <location>
        <begin position="136"/>
        <end position="138"/>
    </location>
</feature>
<feature type="strand" evidence="17">
    <location>
        <begin position="141"/>
        <end position="144"/>
    </location>
</feature>
<feature type="turn" evidence="17">
    <location>
        <begin position="145"/>
        <end position="148"/>
    </location>
</feature>
<feature type="strand" evidence="17">
    <location>
        <begin position="149"/>
        <end position="152"/>
    </location>
</feature>
<feature type="helix" evidence="17">
    <location>
        <begin position="161"/>
        <end position="173"/>
    </location>
</feature>
<feature type="helix" evidence="17">
    <location>
        <begin position="180"/>
        <end position="187"/>
    </location>
</feature>
<feature type="helix" evidence="17">
    <location>
        <begin position="190"/>
        <end position="192"/>
    </location>
</feature>
<feature type="helix" evidence="17">
    <location>
        <begin position="197"/>
        <end position="210"/>
    </location>
</feature>
<feature type="strand" evidence="17">
    <location>
        <begin position="218"/>
        <end position="223"/>
    </location>
</feature>
<feature type="turn" evidence="17">
    <location>
        <begin position="224"/>
        <end position="226"/>
    </location>
</feature>
<feature type="strand" evidence="17">
    <location>
        <begin position="227"/>
        <end position="230"/>
    </location>
</feature>
<gene>
    <name evidence="12" type="primary">walR</name>
    <name evidence="14" type="synonym">rr02</name>
    <name evidence="10" type="synonym">vicR</name>
    <name evidence="11" type="synonym">yycF</name>
    <name evidence="14" type="ordered locus">spr1107</name>
</gene>
<accession>Q8DPL7</accession>
<reference evidence="15" key="1">
    <citation type="journal article" date="2001" name="J. Bacteriol.">
        <title>Genome of the bacterium Streptococcus pneumoniae strain R6.</title>
        <authorList>
            <person name="Hoskins J."/>
            <person name="Alborn W.E. Jr."/>
            <person name="Arnold J."/>
            <person name="Blaszczak L.C."/>
            <person name="Burgett S."/>
            <person name="DeHoff B.S."/>
            <person name="Estrem S.T."/>
            <person name="Fritz L."/>
            <person name="Fu D.-J."/>
            <person name="Fuller W."/>
            <person name="Geringer C."/>
            <person name="Gilmour R."/>
            <person name="Glass J.S."/>
            <person name="Khoja H."/>
            <person name="Kraft A.R."/>
            <person name="Lagace R.E."/>
            <person name="LeBlanc D.J."/>
            <person name="Lee L.N."/>
            <person name="Lefkowitz E.J."/>
            <person name="Lu J."/>
            <person name="Matsushima P."/>
            <person name="McAhren S.M."/>
            <person name="McHenney M."/>
            <person name="McLeaster K."/>
            <person name="Mundy C.W."/>
            <person name="Nicas T.I."/>
            <person name="Norris F.H."/>
            <person name="O'Gara M."/>
            <person name="Peery R.B."/>
            <person name="Robertson G.T."/>
            <person name="Rockey P."/>
            <person name="Sun P.-M."/>
            <person name="Winkler M.E."/>
            <person name="Yang Y."/>
            <person name="Young-Bellido M."/>
            <person name="Zhao G."/>
            <person name="Zook C.A."/>
            <person name="Baltz R.H."/>
            <person name="Jaskunas S.R."/>
            <person name="Rosteck P.R. Jr."/>
            <person name="Skatrud P.L."/>
            <person name="Glass J.I."/>
        </authorList>
    </citation>
    <scope>NUCLEOTIDE SEQUENCE [LARGE SCALE GENOMIC DNA]</scope>
    <source>
        <strain evidence="15">ATCC BAA-255 / R6</strain>
    </source>
</reference>
<reference evidence="13" key="2">
    <citation type="journal article" date="2002" name="Infect. Immun.">
        <title>Genetic analysis and functional characterization of the Streptococcus pneumoniae vic operon.</title>
        <authorList>
            <person name="Wagner C."/>
            <person name="de Saizieu A."/>
            <person name="Schoenfeld H.-J."/>
            <person name="Kamber M."/>
            <person name="Lange R."/>
            <person name="Thompson C.J."/>
            <person name="Page M.G."/>
        </authorList>
    </citation>
    <scope>FUNCTION</scope>
</reference>
<reference evidence="13" key="3">
    <citation type="journal article" date="2003" name="Mol. Microbiol.">
        <title>Constitutive expression of PcsB suppresses the requirement for the essential VicR (YycF) response regulator in Streptococcus pneumoniae R6.</title>
        <authorList>
            <person name="Ng W.L."/>
            <person name="Robertson G.T."/>
            <person name="Kazmierczak K.M."/>
            <person name="Zhao J."/>
            <person name="Gilmour R."/>
            <person name="Winkler M.E."/>
        </authorList>
    </citation>
    <scope>FUNCTION</scope>
    <scope>MUTAGENESIS OF ASP-52</scope>
</reference>
<reference evidence="13" key="4">
    <citation type="journal article" date="2012" name="Mol. Microbiol.">
        <title>Involvement of WalK (VicK) phosphatase activity in setting WalR (VicR) response regulator phosphorylation level and limiting cross-talk in Streptococcus pneumoniae D39 cells.</title>
        <authorList>
            <person name="Wayne K.J."/>
            <person name="Li S."/>
            <person name="Kazmierczak K.M."/>
            <person name="Tsui H.C."/>
            <person name="Winkler M.E."/>
        </authorList>
    </citation>
    <scope>PHOSPHORYLATION</scope>
</reference>
<reference evidence="13" key="5">
    <citation type="journal article" date="2017" name="Microbiology">
        <title>Evidence that pneumococcal WalK is regulated by StkP through protein-protein interaction.</title>
        <authorList>
            <person name="Stamsaas G.A."/>
            <person name="Straume D."/>
            <person name="Salehian Z."/>
            <person name="Haavarstein L.S."/>
        </authorList>
    </citation>
    <scope>PHOSPHORYLATION</scope>
    <source>
        <strain evidence="13">R6 / R704</strain>
    </source>
</reference>
<reference evidence="16" key="6">
    <citation type="submission" date="2018-03" db="PDB data bank">
        <title>YycF Effector Domain Structure without DNA bound.</title>
        <authorList>
            <person name="Gabrielsen M."/>
            <person name="Williamson R.M."/>
            <person name="Panjikar S."/>
            <person name="Riboldi-Tunnicliffe A."/>
        </authorList>
    </citation>
    <scope>X-RAY CRYSTALLOGRAPHY (1.93 ANGSTROMS) OF 135-232</scope>
</reference>
<keyword id="KW-0002">3D-structure</keyword>
<keyword id="KW-0963">Cytoplasm</keyword>
<keyword id="KW-0238">DNA-binding</keyword>
<keyword id="KW-0597">Phosphoprotein</keyword>
<keyword id="KW-1185">Reference proteome</keyword>
<keyword id="KW-0804">Transcription</keyword>
<keyword id="KW-0805">Transcription regulation</keyword>
<keyword id="KW-0902">Two-component regulatory system</keyword>
<name>WALR_STRR6</name>
<evidence type="ECO:0000250" key="1">
    <source>
        <dbReference type="UniProtKB" id="A0A0H2UQ68"/>
    </source>
</evidence>
<evidence type="ECO:0000250" key="2">
    <source>
        <dbReference type="UniProtKB" id="A0A0H2ZN37"/>
    </source>
</evidence>
<evidence type="ECO:0000250" key="3">
    <source>
        <dbReference type="UniProtKB" id="P37478"/>
    </source>
</evidence>
<evidence type="ECO:0000255" key="4">
    <source>
        <dbReference type="PROSITE-ProRule" id="PRU00169"/>
    </source>
</evidence>
<evidence type="ECO:0000255" key="5">
    <source>
        <dbReference type="PROSITE-ProRule" id="PRU01091"/>
    </source>
</evidence>
<evidence type="ECO:0000269" key="6">
    <source>
    </source>
</evidence>
<evidence type="ECO:0000269" key="7">
    <source>
    </source>
</evidence>
<evidence type="ECO:0000269" key="8">
    <source>
    </source>
</evidence>
<evidence type="ECO:0000269" key="9">
    <source>
    </source>
</evidence>
<evidence type="ECO:0000303" key="10">
    <source>
    </source>
</evidence>
<evidence type="ECO:0000303" key="11">
    <source>
    </source>
</evidence>
<evidence type="ECO:0000303" key="12">
    <source>
    </source>
</evidence>
<evidence type="ECO:0000305" key="13"/>
<evidence type="ECO:0000312" key="14">
    <source>
        <dbReference type="EMBL" id="AAK99910.1"/>
    </source>
</evidence>
<evidence type="ECO:0000312" key="15">
    <source>
        <dbReference type="Proteomes" id="UP000000586"/>
    </source>
</evidence>
<evidence type="ECO:0007744" key="16">
    <source>
        <dbReference type="PDB" id="6CQG"/>
    </source>
</evidence>
<evidence type="ECO:0007829" key="17">
    <source>
        <dbReference type="PDB" id="6CQG"/>
    </source>
</evidence>
<dbReference type="EMBL" id="AE007317">
    <property type="protein sequence ID" value="AAK99910.1"/>
    <property type="status" value="ALT_INIT"/>
    <property type="molecule type" value="Genomic_DNA"/>
</dbReference>
<dbReference type="PIR" id="B98010">
    <property type="entry name" value="B98010"/>
</dbReference>
<dbReference type="RefSeq" id="NP_358700.1">
    <property type="nucleotide sequence ID" value="NC_003098.1"/>
</dbReference>
<dbReference type="RefSeq" id="WP_000722076.1">
    <property type="nucleotide sequence ID" value="NC_003098.1"/>
</dbReference>
<dbReference type="PDB" id="6CQG">
    <property type="method" value="X-ray"/>
    <property type="resolution" value="1.93 A"/>
    <property type="chains" value="A=135-232"/>
</dbReference>
<dbReference type="PDBsum" id="6CQG"/>
<dbReference type="SMR" id="Q8DPL7"/>
<dbReference type="STRING" id="171101.spr1107"/>
<dbReference type="GeneID" id="45653482"/>
<dbReference type="KEGG" id="spr:spr1107"/>
<dbReference type="PATRIC" id="fig|171101.6.peg.1202"/>
<dbReference type="eggNOG" id="COG0745">
    <property type="taxonomic scope" value="Bacteria"/>
</dbReference>
<dbReference type="HOGENOM" id="CLU_000445_30_4_9"/>
<dbReference type="Proteomes" id="UP000000586">
    <property type="component" value="Chromosome"/>
</dbReference>
<dbReference type="GO" id="GO:0005829">
    <property type="term" value="C:cytosol"/>
    <property type="evidence" value="ECO:0000318"/>
    <property type="project" value="GO_Central"/>
</dbReference>
<dbReference type="GO" id="GO:0032993">
    <property type="term" value="C:protein-DNA complex"/>
    <property type="evidence" value="ECO:0000318"/>
    <property type="project" value="GO_Central"/>
</dbReference>
<dbReference type="GO" id="GO:0000156">
    <property type="term" value="F:phosphorelay response regulator activity"/>
    <property type="evidence" value="ECO:0000318"/>
    <property type="project" value="GO_Central"/>
</dbReference>
<dbReference type="GO" id="GO:0000976">
    <property type="term" value="F:transcription cis-regulatory region binding"/>
    <property type="evidence" value="ECO:0000318"/>
    <property type="project" value="GO_Central"/>
</dbReference>
<dbReference type="GO" id="GO:0006355">
    <property type="term" value="P:regulation of DNA-templated transcription"/>
    <property type="evidence" value="ECO:0000318"/>
    <property type="project" value="GO_Central"/>
</dbReference>
<dbReference type="CDD" id="cd17614">
    <property type="entry name" value="REC_OmpR_YycF-like"/>
    <property type="match status" value="1"/>
</dbReference>
<dbReference type="CDD" id="cd00383">
    <property type="entry name" value="trans_reg_C"/>
    <property type="match status" value="1"/>
</dbReference>
<dbReference type="FunFam" id="1.10.10.10:FF:000089">
    <property type="entry name" value="Alkaline phosphatase synthesis response regulator"/>
    <property type="match status" value="1"/>
</dbReference>
<dbReference type="FunFam" id="3.40.50.2300:FF:000052">
    <property type="entry name" value="DNA-binding response regulator YycF"/>
    <property type="match status" value="1"/>
</dbReference>
<dbReference type="Gene3D" id="3.40.50.2300">
    <property type="match status" value="1"/>
</dbReference>
<dbReference type="Gene3D" id="6.10.250.690">
    <property type="match status" value="1"/>
</dbReference>
<dbReference type="Gene3D" id="1.10.10.10">
    <property type="entry name" value="Winged helix-like DNA-binding domain superfamily/Winged helix DNA-binding domain"/>
    <property type="match status" value="1"/>
</dbReference>
<dbReference type="InterPro" id="IPR011006">
    <property type="entry name" value="CheY-like_superfamily"/>
</dbReference>
<dbReference type="InterPro" id="IPR001867">
    <property type="entry name" value="OmpR/PhoB-type_DNA-bd"/>
</dbReference>
<dbReference type="InterPro" id="IPR047791">
    <property type="entry name" value="Resp_reg_WalR"/>
</dbReference>
<dbReference type="InterPro" id="IPR016032">
    <property type="entry name" value="Sig_transdc_resp-reg_C-effctor"/>
</dbReference>
<dbReference type="InterPro" id="IPR001789">
    <property type="entry name" value="Sig_transdc_resp-reg_receiver"/>
</dbReference>
<dbReference type="InterPro" id="IPR039420">
    <property type="entry name" value="WalR-like"/>
</dbReference>
<dbReference type="InterPro" id="IPR036388">
    <property type="entry name" value="WH-like_DNA-bd_sf"/>
</dbReference>
<dbReference type="NCBIfam" id="NF040534">
    <property type="entry name" value="resp_reg_YycF"/>
    <property type="match status" value="1"/>
</dbReference>
<dbReference type="PANTHER" id="PTHR48111:SF40">
    <property type="entry name" value="PHOSPHATE REGULON TRANSCRIPTIONAL REGULATORY PROTEIN PHOB"/>
    <property type="match status" value="1"/>
</dbReference>
<dbReference type="PANTHER" id="PTHR48111">
    <property type="entry name" value="REGULATOR OF RPOS"/>
    <property type="match status" value="1"/>
</dbReference>
<dbReference type="Pfam" id="PF00072">
    <property type="entry name" value="Response_reg"/>
    <property type="match status" value="1"/>
</dbReference>
<dbReference type="Pfam" id="PF00486">
    <property type="entry name" value="Trans_reg_C"/>
    <property type="match status" value="1"/>
</dbReference>
<dbReference type="SMART" id="SM00448">
    <property type="entry name" value="REC"/>
    <property type="match status" value="1"/>
</dbReference>
<dbReference type="SMART" id="SM00862">
    <property type="entry name" value="Trans_reg_C"/>
    <property type="match status" value="1"/>
</dbReference>
<dbReference type="SUPFAM" id="SSF46894">
    <property type="entry name" value="C-terminal effector domain of the bipartite response regulators"/>
    <property type="match status" value="1"/>
</dbReference>
<dbReference type="SUPFAM" id="SSF52172">
    <property type="entry name" value="CheY-like"/>
    <property type="match status" value="1"/>
</dbReference>
<dbReference type="PROSITE" id="PS51755">
    <property type="entry name" value="OMPR_PHOB"/>
    <property type="match status" value="1"/>
</dbReference>
<dbReference type="PROSITE" id="PS50110">
    <property type="entry name" value="RESPONSE_REGULATORY"/>
    <property type="match status" value="1"/>
</dbReference>